<evidence type="ECO:0000250" key="1"/>
<evidence type="ECO:0000255" key="2"/>
<evidence type="ECO:0000255" key="3">
    <source>
        <dbReference type="PROSITE-ProRule" id="PRU00175"/>
    </source>
</evidence>
<evidence type="ECO:0000256" key="4">
    <source>
        <dbReference type="SAM" id="MobiDB-lite"/>
    </source>
</evidence>
<evidence type="ECO:0000269" key="5">
    <source>
    </source>
</evidence>
<evidence type="ECO:0000269" key="6">
    <source>
    </source>
</evidence>
<evidence type="ECO:0000303" key="7">
    <source>
    </source>
</evidence>
<evidence type="ECO:0000303" key="8">
    <source>
    </source>
</evidence>
<evidence type="ECO:0000305" key="9"/>
<evidence type="ECO:0000312" key="10">
    <source>
        <dbReference type="EMBL" id="AAL79702.1"/>
    </source>
</evidence>
<evidence type="ECO:0000312" key="11">
    <source>
        <dbReference type="EMBL" id="ABB47997.1"/>
    </source>
</evidence>
<evidence type="ECO:0000312" key="12">
    <source>
        <dbReference type="EMBL" id="BAT12107.1"/>
    </source>
</evidence>
<evidence type="ECO:0000312" key="13">
    <source>
        <dbReference type="EMBL" id="EEE51418.1"/>
    </source>
</evidence>
<protein>
    <recommendedName>
        <fullName evidence="9">E3 ubiquitin-protein ligase BRE1-like 2</fullName>
        <ecNumber evidence="5 6">2.3.2.27</ecNumber>
    </recommendedName>
    <alternativeName>
        <fullName evidence="8">Flowering-related RING protein 1</fullName>
    </alternativeName>
    <alternativeName>
        <fullName evidence="7">Protein HISTONE MONOUBIQUITINATION 2</fullName>
        <shortName evidence="7">OsHUB2</shortName>
    </alternativeName>
    <alternativeName>
        <fullName evidence="9">RING-type E3 ubiquitin transferase BRE1-like 2</fullName>
    </alternativeName>
</protein>
<comment type="function">
    <text evidence="5 6">E3 ubiquitin-protein ligase that monoubiquitinates H2B to form H2BK143ub1. H2BK143ub1 gives a specific tag for epigenetic transcriptional activation and is a prerequisite for H3 Lys-4 methylation (H3K4me). It thereby plays a central role in histone code and gene regulation (PubMed:26143250, PubMed:26934377). H2B monoubiquitination, mediated by HUB2, modulates transcriptional regulation of anther development, likely by promoting histone H3K4 dimethylation (H3K4me2) in the chromatin of the key tapetum degradation-related genes C4, CP1 and UDT1 (PubMed:26143250). H2B monoubiquitination, mediated by HUB2, modulates transcriptional regulation of genes associated with flowering time and plant yield (PubMed:26934377).</text>
</comment>
<comment type="catalytic activity">
    <reaction evidence="5 6">
        <text>S-ubiquitinyl-[E2 ubiquitin-conjugating enzyme]-L-cysteine + [acceptor protein]-L-lysine = [E2 ubiquitin-conjugating enzyme]-L-cysteine + N(6)-ubiquitinyl-[acceptor protein]-L-lysine.</text>
        <dbReference type="EC" id="2.3.2.27"/>
    </reaction>
</comment>
<comment type="pathway">
    <text evidence="9">Protein modification; protein ubiquitination.</text>
</comment>
<comment type="subunit">
    <text evidence="5">Interacts with HUB1.</text>
</comment>
<comment type="subcellular location">
    <subcellularLocation>
        <location evidence="5">Nucleus</location>
    </subcellularLocation>
</comment>
<comment type="domain">
    <text evidence="1">The RING-type zinc finger domain mediates binding to an E2 ubiquitin-conjugating enzyme.</text>
</comment>
<comment type="PTM">
    <text evidence="6">Auto-ubiquitinated in vitro.</text>
</comment>
<comment type="disruption phenotype">
    <text evidence="5">Semi-dwarf plants, early heading, and partial sterility of spikelets due to defects in the anther developmental program and pollen formation.</text>
</comment>
<comment type="miscellaneous">
    <text evidence="6">Plant silencing HUB2 exhibit early flowering, increased plant height, and increased panicle and grain length.</text>
</comment>
<comment type="similarity">
    <text evidence="9">Belongs to the BRE1 family.</text>
</comment>
<comment type="sequence caution" evidence="9">
    <conflict type="erroneous gene model prediction">
        <sequence resource="EMBL-CDS" id="AAL79702"/>
    </conflict>
</comment>
<comment type="sequence caution" evidence="9">
    <conflict type="erroneous gene model prediction">
        <sequence resource="EMBL-CDS" id="ABB47998"/>
    </conflict>
</comment>
<gene>
    <name evidence="7" type="primary">HUB2</name>
    <name evidence="9" type="synonym">BRE1B</name>
    <name evidence="8" type="synonym">FRRP1</name>
    <name evidence="12" type="ordered locus">Os10g0565600</name>
    <name evidence="11" type="ordered locus">LOC_Os10g41590</name>
    <name type="ORF">OsJ_031219</name>
    <name evidence="13" type="ORF">OsJ_32496</name>
    <name evidence="10" type="ORF">OSJNBa0057L21</name>
</gene>
<organism>
    <name type="scientific">Oryza sativa subsp. japonica</name>
    <name type="common">Rice</name>
    <dbReference type="NCBI Taxonomy" id="39947"/>
    <lineage>
        <taxon>Eukaryota</taxon>
        <taxon>Viridiplantae</taxon>
        <taxon>Streptophyta</taxon>
        <taxon>Embryophyta</taxon>
        <taxon>Tracheophyta</taxon>
        <taxon>Spermatophyta</taxon>
        <taxon>Magnoliopsida</taxon>
        <taxon>Liliopsida</taxon>
        <taxon>Poales</taxon>
        <taxon>Poaceae</taxon>
        <taxon>BOP clade</taxon>
        <taxon>Oryzoideae</taxon>
        <taxon>Oryzeae</taxon>
        <taxon>Oryzinae</taxon>
        <taxon>Oryza</taxon>
        <taxon>Oryza sativa</taxon>
    </lineage>
</organism>
<feature type="chain" id="PRO_0000293112" description="E3 ubiquitin-protein ligase BRE1-like 2">
    <location>
        <begin position="1"/>
        <end position="844"/>
    </location>
</feature>
<feature type="zinc finger region" description="RING-type" evidence="3">
    <location>
        <begin position="792"/>
        <end position="831"/>
    </location>
</feature>
<feature type="region of interest" description="Disordered" evidence="4">
    <location>
        <begin position="244"/>
        <end position="269"/>
    </location>
</feature>
<feature type="coiled-coil region" evidence="2">
    <location>
        <begin position="1"/>
        <end position="38"/>
    </location>
</feature>
<feature type="coiled-coil region" evidence="2">
    <location>
        <begin position="160"/>
        <end position="240"/>
    </location>
</feature>
<feature type="coiled-coil region" evidence="2">
    <location>
        <begin position="290"/>
        <end position="604"/>
    </location>
</feature>
<feature type="coiled-coil region" evidence="2">
    <location>
        <begin position="640"/>
        <end position="670"/>
    </location>
</feature>
<feature type="compositionally biased region" description="Polar residues" evidence="4">
    <location>
        <begin position="245"/>
        <end position="261"/>
    </location>
</feature>
<feature type="mutagenesis site" description="Abolishes E3 ubiquitin-protein ligase activity." evidence="6">
    <original>C</original>
    <variation>S</variation>
    <location>
        <position position="830"/>
    </location>
</feature>
<sequence>MDAAALQYENQKLVQQLEAQKSKMRALEGKFKELRDEQCSYDNTLICLNKMWNQLIDDLVLLGVRAGGDLNGLQALDHEEMSEESLESCPSEEIFLFRLLNSRNFRNNDDSSLSKLVEEALALRYSTTVTLMKSLQEAFAVQQARSESLSLALNGQNSSEDVIVALENHNDYLKEVVDNLRQAVSIINRKHEKYLDEIEAFKNNQSRELHEVKCLSGELEESMAELEESRRKLAVLQLQTGGGSLMNTSAPNGVNGSVSTDKSSDKGMGWRDLKDAVEEAKTLAANRLFELHETQEDNLILSKQLEDIQDQLKDENYIVTSKPYTILSDQLHHLNAEIERYRGLVEVLQNEKDQLMQKEEEMLAKAESVDAVQQSITTYKAKIEDLEHEIQKLMAEKNDLEIKAEEALQDSGKKDFKDEIHVMAASLSKEMELLDNQMNRSKDAASEALALREEADYLRTLLAKKIDEQKEISDRYNTQVTEIKSLKALIETLDQEKQELQFIVDMLGKECSESRAISEIEESENRARKQAEYLRKCLEEHNLELRVKAANEAETACQQRLSIAEAELEDLRAKVDASERDVMKLKESIRIKEAEVDGHISEIETIGQAYEDMQTQNQHLLQQVADRDDFNIKLVSDSVKMKQAYGSLLAEKNMLQKQLQHVNSSLESSKLKITSGEEQMKTYVAQAMKSSSENRHLAISLERTMLEVSDAEKELKWLRSATGSAEKEYEINQKKIAELKMELERERNERIKLEEEYEEVKNEVSELTSETEETTIQKLQDEIKECKAILKCGVCFDRPKEVVITKCFHLFCSPCIQRNLEIRHRKCPGCGTPFGQSDVREVKI</sequence>
<reference key="1">
    <citation type="journal article" date="2003" name="Science">
        <title>In-depth view of structure, activity, and evolution of rice chromosome 10.</title>
        <authorList>
            <person name="Yu Y."/>
            <person name="Rambo T."/>
            <person name="Currie J."/>
            <person name="Saski C."/>
            <person name="Kim H.-R."/>
            <person name="Collura K."/>
            <person name="Thompson S."/>
            <person name="Simmons J."/>
            <person name="Yang T.-J."/>
            <person name="Nah G."/>
            <person name="Patel A.J."/>
            <person name="Thurmond S."/>
            <person name="Henry D."/>
            <person name="Oates R."/>
            <person name="Palmer M."/>
            <person name="Pries G."/>
            <person name="Gibson J."/>
            <person name="Anderson H."/>
            <person name="Paradkar M."/>
            <person name="Crane L."/>
            <person name="Dale J."/>
            <person name="Carver M.B."/>
            <person name="Wood T."/>
            <person name="Frisch D."/>
            <person name="Engler F."/>
            <person name="Soderlund C."/>
            <person name="Palmer L.E."/>
            <person name="Teytelman L."/>
            <person name="Nascimento L."/>
            <person name="De la Bastide M."/>
            <person name="Spiegel L."/>
            <person name="Ware D."/>
            <person name="O'Shaughnessy A."/>
            <person name="Dike S."/>
            <person name="Dedhia N."/>
            <person name="Preston R."/>
            <person name="Huang E."/>
            <person name="Ferraro K."/>
            <person name="Kuit K."/>
            <person name="Miller B."/>
            <person name="Zutavern T."/>
            <person name="Katzenberger F."/>
            <person name="Muller S."/>
            <person name="Balija V."/>
            <person name="Martienssen R.A."/>
            <person name="Stein L."/>
            <person name="Minx P."/>
            <person name="Johnson D."/>
            <person name="Cordum H."/>
            <person name="Mardis E."/>
            <person name="Cheng Z."/>
            <person name="Jiang J."/>
            <person name="Wilson R."/>
            <person name="McCombie W.R."/>
            <person name="Wing R.A."/>
            <person name="Yuan Q."/>
            <person name="Ouyang S."/>
            <person name="Liu J."/>
            <person name="Jones K.M."/>
            <person name="Gansberger K."/>
            <person name="Moffat K."/>
            <person name="Hill J."/>
            <person name="Tsitrin T."/>
            <person name="Overton L."/>
            <person name="Bera J."/>
            <person name="Kim M."/>
            <person name="Jin S."/>
            <person name="Tallon L."/>
            <person name="Ciecko A."/>
            <person name="Pai G."/>
            <person name="Van Aken S."/>
            <person name="Utterback T."/>
            <person name="Reidmuller S."/>
            <person name="Bormann J."/>
            <person name="Feldblyum T."/>
            <person name="Hsiao J."/>
            <person name="Zismann V."/>
            <person name="Blunt S."/>
            <person name="de Vazeille A.R."/>
            <person name="Shaffer T."/>
            <person name="Koo H."/>
            <person name="Suh B."/>
            <person name="Yang Q."/>
            <person name="Haas B."/>
            <person name="Peterson J."/>
            <person name="Pertea M."/>
            <person name="Volfovsky N."/>
            <person name="Wortman J."/>
            <person name="White O."/>
            <person name="Salzberg S.L."/>
            <person name="Fraser C.M."/>
            <person name="Buell C.R."/>
            <person name="Messing J."/>
            <person name="Song R."/>
            <person name="Fuks G."/>
            <person name="Llaca V."/>
            <person name="Kovchak S."/>
            <person name="Young S."/>
            <person name="Bowers J.E."/>
            <person name="Paterson A.H."/>
            <person name="Johns M.A."/>
            <person name="Mao L."/>
            <person name="Pan H."/>
            <person name="Dean R.A."/>
        </authorList>
    </citation>
    <scope>NUCLEOTIDE SEQUENCE [LARGE SCALE GENOMIC DNA]</scope>
    <source>
        <strain>cv. Nipponbare</strain>
    </source>
</reference>
<reference key="2">
    <citation type="journal article" date="2005" name="Nature">
        <title>The map-based sequence of the rice genome.</title>
        <authorList>
            <consortium name="International rice genome sequencing project (IRGSP)"/>
        </authorList>
    </citation>
    <scope>NUCLEOTIDE SEQUENCE [LARGE SCALE GENOMIC DNA]</scope>
    <source>
        <strain>cv. Nipponbare</strain>
    </source>
</reference>
<reference key="3">
    <citation type="journal article" date="2008" name="Nucleic Acids Res.">
        <title>The rice annotation project database (RAP-DB): 2008 update.</title>
        <authorList>
            <consortium name="The rice annotation project (RAP)"/>
        </authorList>
    </citation>
    <scope>GENOME REANNOTATION</scope>
    <source>
        <strain>cv. Nipponbare</strain>
    </source>
</reference>
<reference key="4">
    <citation type="journal article" date="2013" name="Rice">
        <title>Improvement of the Oryza sativa Nipponbare reference genome using next generation sequence and optical map data.</title>
        <authorList>
            <person name="Kawahara Y."/>
            <person name="de la Bastide M."/>
            <person name="Hamilton J.P."/>
            <person name="Kanamori H."/>
            <person name="McCombie W.R."/>
            <person name="Ouyang S."/>
            <person name="Schwartz D.C."/>
            <person name="Tanaka T."/>
            <person name="Wu J."/>
            <person name="Zhou S."/>
            <person name="Childs K.L."/>
            <person name="Davidson R.M."/>
            <person name="Lin H."/>
            <person name="Quesada-Ocampo L."/>
            <person name="Vaillancourt B."/>
            <person name="Sakai H."/>
            <person name="Lee S.S."/>
            <person name="Kim J."/>
            <person name="Numa H."/>
            <person name="Itoh T."/>
            <person name="Buell C.R."/>
            <person name="Matsumoto T."/>
        </authorList>
    </citation>
    <scope>GENOME REANNOTATION</scope>
    <source>
        <strain>cv. Nipponbare</strain>
    </source>
</reference>
<reference key="5">
    <citation type="journal article" date="2005" name="PLoS Biol.">
        <title>The genomes of Oryza sativa: a history of duplications.</title>
        <authorList>
            <person name="Yu J."/>
            <person name="Wang J."/>
            <person name="Lin W."/>
            <person name="Li S."/>
            <person name="Li H."/>
            <person name="Zhou J."/>
            <person name="Ni P."/>
            <person name="Dong W."/>
            <person name="Hu S."/>
            <person name="Zeng C."/>
            <person name="Zhang J."/>
            <person name="Zhang Y."/>
            <person name="Li R."/>
            <person name="Xu Z."/>
            <person name="Li S."/>
            <person name="Li X."/>
            <person name="Zheng H."/>
            <person name="Cong L."/>
            <person name="Lin L."/>
            <person name="Yin J."/>
            <person name="Geng J."/>
            <person name="Li G."/>
            <person name="Shi J."/>
            <person name="Liu J."/>
            <person name="Lv H."/>
            <person name="Li J."/>
            <person name="Wang J."/>
            <person name="Deng Y."/>
            <person name="Ran L."/>
            <person name="Shi X."/>
            <person name="Wang X."/>
            <person name="Wu Q."/>
            <person name="Li C."/>
            <person name="Ren X."/>
            <person name="Wang J."/>
            <person name="Wang X."/>
            <person name="Li D."/>
            <person name="Liu D."/>
            <person name="Zhang X."/>
            <person name="Ji Z."/>
            <person name="Zhao W."/>
            <person name="Sun Y."/>
            <person name="Zhang Z."/>
            <person name="Bao J."/>
            <person name="Han Y."/>
            <person name="Dong L."/>
            <person name="Ji J."/>
            <person name="Chen P."/>
            <person name="Wu S."/>
            <person name="Liu J."/>
            <person name="Xiao Y."/>
            <person name="Bu D."/>
            <person name="Tan J."/>
            <person name="Yang L."/>
            <person name="Ye C."/>
            <person name="Zhang J."/>
            <person name="Xu J."/>
            <person name="Zhou Y."/>
            <person name="Yu Y."/>
            <person name="Zhang B."/>
            <person name="Zhuang S."/>
            <person name="Wei H."/>
            <person name="Liu B."/>
            <person name="Lei M."/>
            <person name="Yu H."/>
            <person name="Li Y."/>
            <person name="Xu H."/>
            <person name="Wei S."/>
            <person name="He X."/>
            <person name="Fang L."/>
            <person name="Zhang Z."/>
            <person name="Zhang Y."/>
            <person name="Huang X."/>
            <person name="Su Z."/>
            <person name="Tong W."/>
            <person name="Li J."/>
            <person name="Tong Z."/>
            <person name="Li S."/>
            <person name="Ye J."/>
            <person name="Wang L."/>
            <person name="Fang L."/>
            <person name="Lei T."/>
            <person name="Chen C.-S."/>
            <person name="Chen H.-C."/>
            <person name="Xu Z."/>
            <person name="Li H."/>
            <person name="Huang H."/>
            <person name="Zhang F."/>
            <person name="Xu H."/>
            <person name="Li N."/>
            <person name="Zhao C."/>
            <person name="Li S."/>
            <person name="Dong L."/>
            <person name="Huang Y."/>
            <person name="Li L."/>
            <person name="Xi Y."/>
            <person name="Qi Q."/>
            <person name="Li W."/>
            <person name="Zhang B."/>
            <person name="Hu W."/>
            <person name="Zhang Y."/>
            <person name="Tian X."/>
            <person name="Jiao Y."/>
            <person name="Liang X."/>
            <person name="Jin J."/>
            <person name="Gao L."/>
            <person name="Zheng W."/>
            <person name="Hao B."/>
            <person name="Liu S.-M."/>
            <person name="Wang W."/>
            <person name="Yuan L."/>
            <person name="Cao M."/>
            <person name="McDermott J."/>
            <person name="Samudrala R."/>
            <person name="Wang J."/>
            <person name="Wong G.K.-S."/>
            <person name="Yang H."/>
        </authorList>
    </citation>
    <scope>NUCLEOTIDE SEQUENCE [LARGE SCALE GENOMIC DNA]</scope>
    <source>
        <strain>cv. Nipponbare</strain>
    </source>
</reference>
<reference key="6">
    <citation type="journal article" date="2003" name="Science">
        <title>Collection, mapping, and annotation of over 28,000 cDNA clones from japonica rice.</title>
        <authorList>
            <consortium name="The rice full-length cDNA consortium"/>
        </authorList>
    </citation>
    <scope>NUCLEOTIDE SEQUENCE [LARGE SCALE MRNA]</scope>
    <source>
        <strain>cv. Nipponbare</strain>
    </source>
</reference>
<reference key="7">
    <citation type="journal article" date="2015" name="Plant Physiol.">
        <title>Histone H2B monoubiquitination mediated by HISTONE MONOUBIQUITINATION1 and HISTONE MONOUBIQUITINATION2 is involved in anther development by regulating tapetum degradation-related genes in rice.</title>
        <authorList>
            <person name="Cao H."/>
            <person name="Li X."/>
            <person name="Wang Z."/>
            <person name="Ding M."/>
            <person name="Sun Y."/>
            <person name="Dong F."/>
            <person name="Chen F."/>
            <person name="Liu L."/>
            <person name="Doughty J."/>
            <person name="Li Y."/>
            <person name="Liu Y.X."/>
        </authorList>
    </citation>
    <scope>FUNCTION</scope>
    <scope>CATALYTIC ACTIVITY</scope>
    <scope>INTERACTION WITH HUB1</scope>
    <scope>SUBCELLULAR LOCATION</scope>
    <scope>DISRUPTION PHENOTYPE</scope>
</reference>
<reference key="8">
    <citation type="journal article" date="2016" name="PLoS ONE">
        <title>Flowering-related RING protein 1 (FRRP1) regulates flowering time and yield potential by affecting histone H2B monoubiquitination in rice (Oryza Sativa).</title>
        <authorList>
            <person name="Du Y."/>
            <person name="He W."/>
            <person name="Deng C."/>
            <person name="Chen X."/>
            <person name="Gou L."/>
            <person name="Zhu F."/>
            <person name="Guo W."/>
            <person name="Zhang J."/>
            <person name="Wang T."/>
        </authorList>
    </citation>
    <scope>FUNCTION</scope>
    <scope>CATALYTIC ACTIVITY</scope>
    <scope>UBIQUITINATION</scope>
    <scope>MUTAGENESIS OF CYS-830</scope>
</reference>
<name>BRE1B_ORYSJ</name>
<proteinExistence type="evidence at protein level"/>
<keyword id="KW-0156">Chromatin regulator</keyword>
<keyword id="KW-0175">Coiled coil</keyword>
<keyword id="KW-0287">Flowering</keyword>
<keyword id="KW-0479">Metal-binding</keyword>
<keyword id="KW-0539">Nucleus</keyword>
<keyword id="KW-1185">Reference proteome</keyword>
<keyword id="KW-0808">Transferase</keyword>
<keyword id="KW-0832">Ubl conjugation</keyword>
<keyword id="KW-0833">Ubl conjugation pathway</keyword>
<keyword id="KW-0862">Zinc</keyword>
<keyword id="KW-0863">Zinc-finger</keyword>
<accession>Q336R3</accession>
<accession>A3C7E7</accession>
<accession>B7EV99</accession>
<accession>Q336R2</accession>
<accession>Q8S7C5</accession>
<dbReference type="EC" id="2.3.2.27" evidence="5 6"/>
<dbReference type="EMBL" id="AC087599">
    <property type="protein sequence ID" value="AAL79702.1"/>
    <property type="status" value="ALT_SEQ"/>
    <property type="molecule type" value="Genomic_DNA"/>
</dbReference>
<dbReference type="EMBL" id="DP000086">
    <property type="protein sequence ID" value="ABB47997.1"/>
    <property type="molecule type" value="Genomic_DNA"/>
</dbReference>
<dbReference type="EMBL" id="DP000086">
    <property type="protein sequence ID" value="ABB47998.1"/>
    <property type="status" value="ALT_SEQ"/>
    <property type="molecule type" value="Genomic_DNA"/>
</dbReference>
<dbReference type="EMBL" id="AP008216">
    <property type="protein sequence ID" value="BAF27258.1"/>
    <property type="molecule type" value="Genomic_DNA"/>
</dbReference>
<dbReference type="EMBL" id="AP014966">
    <property type="protein sequence ID" value="BAT12107.1"/>
    <property type="molecule type" value="Genomic_DNA"/>
</dbReference>
<dbReference type="EMBL" id="CM000147">
    <property type="protein sequence ID" value="EEE51418.1"/>
    <property type="molecule type" value="Genomic_DNA"/>
</dbReference>
<dbReference type="EMBL" id="AK103864">
    <property type="protein sequence ID" value="BAG96296.1"/>
    <property type="molecule type" value="mRNA"/>
</dbReference>
<dbReference type="RefSeq" id="XP_015614586.1">
    <property type="nucleotide sequence ID" value="XM_015759100.1"/>
</dbReference>
<dbReference type="SMR" id="Q336R3"/>
<dbReference type="BioGRID" id="818457">
    <property type="interactions" value="1"/>
</dbReference>
<dbReference type="FunCoup" id="Q336R3">
    <property type="interactions" value="3050"/>
</dbReference>
<dbReference type="STRING" id="39947.Q336R3"/>
<dbReference type="TCDB" id="9.B.392.4.4">
    <property type="family name" value="the golgi apparatus golgin (golgin) family"/>
</dbReference>
<dbReference type="PaxDb" id="39947-Q336R3"/>
<dbReference type="EnsemblPlants" id="Os10t0565600-01">
    <property type="protein sequence ID" value="Os10t0565600-01"/>
    <property type="gene ID" value="Os10g0565600"/>
</dbReference>
<dbReference type="Gramene" id="Os10t0565600-01">
    <property type="protein sequence ID" value="Os10t0565600-01"/>
    <property type="gene ID" value="Os10g0565600"/>
</dbReference>
<dbReference type="KEGG" id="dosa:Os10g0565600"/>
<dbReference type="eggNOG" id="KOG0978">
    <property type="taxonomic scope" value="Eukaryota"/>
</dbReference>
<dbReference type="HOGENOM" id="CLU_002640_1_0_1"/>
<dbReference type="InParanoid" id="Q336R3"/>
<dbReference type="OMA" id="YSNIDTR"/>
<dbReference type="OrthoDB" id="10266039at2759"/>
<dbReference type="UniPathway" id="UPA00143"/>
<dbReference type="Proteomes" id="UP000000763">
    <property type="component" value="Chromosome 10"/>
</dbReference>
<dbReference type="Proteomes" id="UP000007752">
    <property type="component" value="Chromosome 10"/>
</dbReference>
<dbReference type="Proteomes" id="UP000059680">
    <property type="component" value="Chromosome 10"/>
</dbReference>
<dbReference type="GO" id="GO:0033503">
    <property type="term" value="C:HULC complex"/>
    <property type="evidence" value="ECO:0000318"/>
    <property type="project" value="GO_Central"/>
</dbReference>
<dbReference type="GO" id="GO:0005634">
    <property type="term" value="C:nucleus"/>
    <property type="evidence" value="ECO:0000318"/>
    <property type="project" value="GO_Central"/>
</dbReference>
<dbReference type="GO" id="GO:0042803">
    <property type="term" value="F:protein homodimerization activity"/>
    <property type="evidence" value="ECO:0007669"/>
    <property type="project" value="EnsemblPlants"/>
</dbReference>
<dbReference type="GO" id="GO:0061630">
    <property type="term" value="F:ubiquitin protein ligase activity"/>
    <property type="evidence" value="ECO:0000318"/>
    <property type="project" value="GO_Central"/>
</dbReference>
<dbReference type="GO" id="GO:0008270">
    <property type="term" value="F:zinc ion binding"/>
    <property type="evidence" value="ECO:0007669"/>
    <property type="project" value="UniProtKB-KW"/>
</dbReference>
<dbReference type="GO" id="GO:0006325">
    <property type="term" value="P:chromatin organization"/>
    <property type="evidence" value="ECO:0007669"/>
    <property type="project" value="UniProtKB-KW"/>
</dbReference>
<dbReference type="GO" id="GO:0009908">
    <property type="term" value="P:flower development"/>
    <property type="evidence" value="ECO:0007669"/>
    <property type="project" value="UniProtKB-KW"/>
</dbReference>
<dbReference type="GO" id="GO:0045087">
    <property type="term" value="P:innate immune response"/>
    <property type="evidence" value="ECO:0007669"/>
    <property type="project" value="EnsemblPlants"/>
</dbReference>
<dbReference type="GO" id="GO:0009965">
    <property type="term" value="P:leaf morphogenesis"/>
    <property type="evidence" value="ECO:0007669"/>
    <property type="project" value="EnsemblPlants"/>
</dbReference>
<dbReference type="GO" id="GO:0016567">
    <property type="term" value="P:protein ubiquitination"/>
    <property type="evidence" value="ECO:0007669"/>
    <property type="project" value="UniProtKB-UniPathway"/>
</dbReference>
<dbReference type="GO" id="GO:0010162">
    <property type="term" value="P:seed dormancy process"/>
    <property type="evidence" value="ECO:0007669"/>
    <property type="project" value="EnsemblPlants"/>
</dbReference>
<dbReference type="GO" id="GO:0010228">
    <property type="term" value="P:vegetative to reproductive phase transition of meristem"/>
    <property type="evidence" value="ECO:0007669"/>
    <property type="project" value="EnsemblPlants"/>
</dbReference>
<dbReference type="CDD" id="cd16499">
    <property type="entry name" value="RING-HC_Bre1-like"/>
    <property type="match status" value="1"/>
</dbReference>
<dbReference type="Gene3D" id="3.30.40.10">
    <property type="entry name" value="Zinc/RING finger domain, C3HC4 (zinc finger)"/>
    <property type="match status" value="1"/>
</dbReference>
<dbReference type="InterPro" id="IPR013956">
    <property type="entry name" value="E3_ubiquit_lig_Bre1"/>
</dbReference>
<dbReference type="InterPro" id="IPR018957">
    <property type="entry name" value="Znf_C3HC4_RING-type"/>
</dbReference>
<dbReference type="InterPro" id="IPR001841">
    <property type="entry name" value="Znf_RING"/>
</dbReference>
<dbReference type="InterPro" id="IPR013083">
    <property type="entry name" value="Znf_RING/FYVE/PHD"/>
</dbReference>
<dbReference type="InterPro" id="IPR017907">
    <property type="entry name" value="Znf_RING_CS"/>
</dbReference>
<dbReference type="PANTHER" id="PTHR23163:SF8">
    <property type="entry name" value="E3 UBIQUITIN-PROTEIN LIGASE BRE1-LIKE 2"/>
    <property type="match status" value="1"/>
</dbReference>
<dbReference type="PANTHER" id="PTHR23163">
    <property type="entry name" value="RING FINGER PROTEIN-RELATED"/>
    <property type="match status" value="1"/>
</dbReference>
<dbReference type="Pfam" id="PF00097">
    <property type="entry name" value="zf-C3HC4"/>
    <property type="match status" value="1"/>
</dbReference>
<dbReference type="SMART" id="SM00184">
    <property type="entry name" value="RING"/>
    <property type="match status" value="1"/>
</dbReference>
<dbReference type="SUPFAM" id="SSF57850">
    <property type="entry name" value="RING/U-box"/>
    <property type="match status" value="1"/>
</dbReference>
<dbReference type="PROSITE" id="PS00518">
    <property type="entry name" value="ZF_RING_1"/>
    <property type="match status" value="1"/>
</dbReference>
<dbReference type="PROSITE" id="PS50089">
    <property type="entry name" value="ZF_RING_2"/>
    <property type="match status" value="1"/>
</dbReference>